<reference key="1">
    <citation type="journal article" date="2006" name="Proc. Natl. Acad. Sci. U.S.A.">
        <title>Genome reduction in Leptospira borgpetersenii reflects limited transmission potential.</title>
        <authorList>
            <person name="Bulach D.M."/>
            <person name="Zuerner R.L."/>
            <person name="Wilson P."/>
            <person name="Seemann T."/>
            <person name="McGrath A."/>
            <person name="Cullen P.A."/>
            <person name="Davis J."/>
            <person name="Johnson M."/>
            <person name="Kuczek E."/>
            <person name="Alt D.P."/>
            <person name="Peterson-Burch B."/>
            <person name="Coppel R.L."/>
            <person name="Rood J.I."/>
            <person name="Davies J.K."/>
            <person name="Adler B."/>
        </authorList>
    </citation>
    <scope>NUCLEOTIDE SEQUENCE [LARGE SCALE GENOMIC DNA]</scope>
    <source>
        <strain>L550</strain>
    </source>
</reference>
<feature type="chain" id="PRO_1000046043" description="Ribosomal protein L11 methyltransferase">
    <location>
        <begin position="1"/>
        <end position="300"/>
    </location>
</feature>
<feature type="binding site" evidence="1">
    <location>
        <position position="147"/>
    </location>
    <ligand>
        <name>S-adenosyl-L-methionine</name>
        <dbReference type="ChEBI" id="CHEBI:59789"/>
    </ligand>
</feature>
<feature type="binding site" evidence="1">
    <location>
        <position position="168"/>
    </location>
    <ligand>
        <name>S-adenosyl-L-methionine</name>
        <dbReference type="ChEBI" id="CHEBI:59789"/>
    </ligand>
</feature>
<feature type="binding site" evidence="1">
    <location>
        <position position="190"/>
    </location>
    <ligand>
        <name>S-adenosyl-L-methionine</name>
        <dbReference type="ChEBI" id="CHEBI:59789"/>
    </ligand>
</feature>
<feature type="binding site" evidence="1">
    <location>
        <position position="236"/>
    </location>
    <ligand>
        <name>S-adenosyl-L-methionine</name>
        <dbReference type="ChEBI" id="CHEBI:59789"/>
    </ligand>
</feature>
<comment type="function">
    <text evidence="1">Methylates ribosomal protein L11.</text>
</comment>
<comment type="catalytic activity">
    <reaction evidence="1">
        <text>L-lysyl-[protein] + 3 S-adenosyl-L-methionine = N(6),N(6),N(6)-trimethyl-L-lysyl-[protein] + 3 S-adenosyl-L-homocysteine + 3 H(+)</text>
        <dbReference type="Rhea" id="RHEA:54192"/>
        <dbReference type="Rhea" id="RHEA-COMP:9752"/>
        <dbReference type="Rhea" id="RHEA-COMP:13826"/>
        <dbReference type="ChEBI" id="CHEBI:15378"/>
        <dbReference type="ChEBI" id="CHEBI:29969"/>
        <dbReference type="ChEBI" id="CHEBI:57856"/>
        <dbReference type="ChEBI" id="CHEBI:59789"/>
        <dbReference type="ChEBI" id="CHEBI:61961"/>
    </reaction>
</comment>
<comment type="subcellular location">
    <subcellularLocation>
        <location evidence="1">Cytoplasm</location>
    </subcellularLocation>
</comment>
<comment type="similarity">
    <text evidence="1">Belongs to the methyltransferase superfamily. PrmA family.</text>
</comment>
<sequence length="300" mass="33743">MKYREIILNIPKEIAEDFTTFLDEIGVAGYYEILFDREVPRAPHEEIISDDTKFRVYLAQEDNENETKILIYLKANAGEVFFSESRWIETKEYEEAYKEFYKPFIVGSYRVIPTWEKDTALGTTPEGIFPLFINPGLAFGTGHHETTRLVLGRMGNLSLSGKKVVDVGTGSGILSVAAAKSGASPILAVDVDPNSVRSASFNRDENDISSEVLAVEEGGFDHEKIQGQTWDLLIANITFAVLKANIQKIVSIKTDHFLFSGVITERLEEFLELLKNEVGGEGVFFQEDTGWELIEWKRKG</sequence>
<dbReference type="EC" id="2.1.1.-" evidence="1"/>
<dbReference type="EMBL" id="CP000348">
    <property type="protein sequence ID" value="ABJ79630.1"/>
    <property type="molecule type" value="Genomic_DNA"/>
</dbReference>
<dbReference type="RefSeq" id="WP_002725156.1">
    <property type="nucleotide sequence ID" value="NC_008508.1"/>
</dbReference>
<dbReference type="SMR" id="Q04Z65"/>
<dbReference type="KEGG" id="lbl:LBL_2224"/>
<dbReference type="HOGENOM" id="CLU_049382_0_2_12"/>
<dbReference type="GO" id="GO:0005737">
    <property type="term" value="C:cytoplasm"/>
    <property type="evidence" value="ECO:0007669"/>
    <property type="project" value="UniProtKB-SubCell"/>
</dbReference>
<dbReference type="GO" id="GO:0016279">
    <property type="term" value="F:protein-lysine N-methyltransferase activity"/>
    <property type="evidence" value="ECO:0007669"/>
    <property type="project" value="RHEA"/>
</dbReference>
<dbReference type="GO" id="GO:0032259">
    <property type="term" value="P:methylation"/>
    <property type="evidence" value="ECO:0007669"/>
    <property type="project" value="UniProtKB-KW"/>
</dbReference>
<dbReference type="CDD" id="cd02440">
    <property type="entry name" value="AdoMet_MTases"/>
    <property type="match status" value="1"/>
</dbReference>
<dbReference type="Gene3D" id="3.40.50.150">
    <property type="entry name" value="Vaccinia Virus protein VP39"/>
    <property type="match status" value="1"/>
</dbReference>
<dbReference type="HAMAP" id="MF_00735">
    <property type="entry name" value="Methyltr_PrmA"/>
    <property type="match status" value="1"/>
</dbReference>
<dbReference type="InterPro" id="IPR050078">
    <property type="entry name" value="Ribosomal_L11_MeTrfase_PrmA"/>
</dbReference>
<dbReference type="InterPro" id="IPR004498">
    <property type="entry name" value="Ribosomal_PrmA_MeTrfase"/>
</dbReference>
<dbReference type="InterPro" id="IPR029063">
    <property type="entry name" value="SAM-dependent_MTases_sf"/>
</dbReference>
<dbReference type="PANTHER" id="PTHR43648">
    <property type="entry name" value="ELECTRON TRANSFER FLAVOPROTEIN BETA SUBUNIT LYSINE METHYLTRANSFERASE"/>
    <property type="match status" value="1"/>
</dbReference>
<dbReference type="PANTHER" id="PTHR43648:SF1">
    <property type="entry name" value="ELECTRON TRANSFER FLAVOPROTEIN BETA SUBUNIT LYSINE METHYLTRANSFERASE"/>
    <property type="match status" value="1"/>
</dbReference>
<dbReference type="Pfam" id="PF06325">
    <property type="entry name" value="PrmA"/>
    <property type="match status" value="1"/>
</dbReference>
<dbReference type="PIRSF" id="PIRSF000401">
    <property type="entry name" value="RPL11_MTase"/>
    <property type="match status" value="1"/>
</dbReference>
<dbReference type="SUPFAM" id="SSF53335">
    <property type="entry name" value="S-adenosyl-L-methionine-dependent methyltransferases"/>
    <property type="match status" value="1"/>
</dbReference>
<proteinExistence type="inferred from homology"/>
<protein>
    <recommendedName>
        <fullName evidence="1">Ribosomal protein L11 methyltransferase</fullName>
        <shortName evidence="1">L11 Mtase</shortName>
        <ecNumber evidence="1">2.1.1.-</ecNumber>
    </recommendedName>
</protein>
<accession>Q04Z65</accession>
<gene>
    <name evidence="1" type="primary">prmA</name>
    <name type="ordered locus">LBL_2224</name>
</gene>
<organism>
    <name type="scientific">Leptospira borgpetersenii serovar Hardjo-bovis (strain L550)</name>
    <dbReference type="NCBI Taxonomy" id="355276"/>
    <lineage>
        <taxon>Bacteria</taxon>
        <taxon>Pseudomonadati</taxon>
        <taxon>Spirochaetota</taxon>
        <taxon>Spirochaetia</taxon>
        <taxon>Leptospirales</taxon>
        <taxon>Leptospiraceae</taxon>
        <taxon>Leptospira</taxon>
    </lineage>
</organism>
<keyword id="KW-0963">Cytoplasm</keyword>
<keyword id="KW-0489">Methyltransferase</keyword>
<keyword id="KW-0949">S-adenosyl-L-methionine</keyword>
<keyword id="KW-0808">Transferase</keyword>
<evidence type="ECO:0000255" key="1">
    <source>
        <dbReference type="HAMAP-Rule" id="MF_00735"/>
    </source>
</evidence>
<name>PRMA_LEPBL</name>